<feature type="chain" id="PRO_0000192383" description="Shikimate kinase 2">
    <location>
        <begin position="1"/>
        <end position="173"/>
    </location>
</feature>
<feature type="region of interest" description="LID domain">
    <location>
        <begin position="112"/>
        <end position="126"/>
    </location>
</feature>
<feature type="binding site">
    <location>
        <begin position="12"/>
        <end position="17"/>
    </location>
    <ligand>
        <name>ATP</name>
        <dbReference type="ChEBI" id="CHEBI:30616"/>
    </ligand>
</feature>
<feature type="binding site">
    <location>
        <position position="16"/>
    </location>
    <ligand>
        <name>Mg(2+)</name>
        <dbReference type="ChEBI" id="CHEBI:18420"/>
    </ligand>
</feature>
<feature type="binding site">
    <location>
        <position position="32"/>
    </location>
    <ligand>
        <name>Mg(2+)</name>
        <dbReference type="ChEBI" id="CHEBI:18420"/>
    </ligand>
</feature>
<feature type="binding site" evidence="6">
    <location>
        <position position="34"/>
    </location>
    <ligand>
        <name>substrate</name>
    </ligand>
</feature>
<feature type="binding site" evidence="6">
    <location>
        <position position="58"/>
    </location>
    <ligand>
        <name>substrate</name>
    </ligand>
</feature>
<feature type="binding site" evidence="1">
    <location>
        <position position="79"/>
    </location>
    <ligand>
        <name>substrate</name>
    </ligand>
</feature>
<feature type="binding site" evidence="1">
    <location>
        <position position="120"/>
    </location>
    <ligand>
        <name>ATP</name>
        <dbReference type="ChEBI" id="CHEBI:30616"/>
    </ligand>
</feature>
<feature type="binding site" evidence="6">
    <location>
        <position position="139"/>
    </location>
    <ligand>
        <name>substrate</name>
    </ligand>
</feature>
<feature type="binding site">
    <location>
        <position position="155"/>
    </location>
    <ligand>
        <name>ATP</name>
        <dbReference type="ChEBI" id="CHEBI:30616"/>
    </ligand>
</feature>
<feature type="mutagenesis site" description="66% of wild-type activity. Increase in substrates affinity." evidence="2">
    <original>C</original>
    <variation>S</variation>
    <location>
        <position position="13"/>
    </location>
</feature>
<feature type="mutagenesis site" description="Loss of activity. Increased thermostability." evidence="2">
    <original>K</original>
    <variation>M</variation>
    <location>
        <position position="15"/>
    </location>
</feature>
<feature type="mutagenesis site" description="Loss of activity." evidence="2">
    <original>D</original>
    <variation>N</variation>
    <location>
        <position position="34"/>
    </location>
</feature>
<feature type="mutagenesis site" description="No effect on activity and substrates affinity." evidence="2">
    <original>C</original>
    <variation>S</variation>
    <location>
        <position position="162"/>
    </location>
</feature>
<feature type="strand" evidence="7">
    <location>
        <begin position="5"/>
        <end position="9"/>
    </location>
</feature>
<feature type="helix" evidence="7">
    <location>
        <begin position="15"/>
        <end position="26"/>
    </location>
</feature>
<feature type="strand" evidence="7">
    <location>
        <begin position="29"/>
        <end position="32"/>
    </location>
</feature>
<feature type="helix" evidence="7">
    <location>
        <begin position="33"/>
        <end position="41"/>
    </location>
</feature>
<feature type="helix" evidence="7">
    <location>
        <begin position="45"/>
        <end position="68"/>
    </location>
</feature>
<feature type="strand" evidence="7">
    <location>
        <begin position="71"/>
        <end position="76"/>
    </location>
</feature>
<feature type="helix" evidence="7">
    <location>
        <begin position="81"/>
        <end position="83"/>
    </location>
</feature>
<feature type="helix" evidence="7">
    <location>
        <begin position="85"/>
        <end position="94"/>
    </location>
</feature>
<feature type="strand" evidence="7">
    <location>
        <begin position="95"/>
        <end position="101"/>
    </location>
</feature>
<feature type="helix" evidence="7">
    <location>
        <begin position="104"/>
        <end position="115"/>
    </location>
</feature>
<feature type="helix" evidence="7">
    <location>
        <begin position="125"/>
        <end position="146"/>
    </location>
</feature>
<feature type="strand" evidence="7">
    <location>
        <begin position="148"/>
        <end position="152"/>
    </location>
</feature>
<feature type="helix" evidence="7">
    <location>
        <begin position="157"/>
        <end position="167"/>
    </location>
</feature>
<sequence length="173" mass="18956">MTEPIFMVGARGCGKTTVGRELARALGYEFVDTDIFMQHTSGMTVADVVAAEGWPGFRRRESEALQAVATPNRVVATGGGMVLLEQNRQFMRAHGTVVYLFAPAEELALRLQASPQAHQRPTLTGRPIAEEMEAVLREREALYQDVAHYVVDATQPPAAIVCELMQTMRLPAA</sequence>
<accession>P10880</accession>
<evidence type="ECO:0000250" key="1"/>
<evidence type="ECO:0000269" key="2">
    <source>
    </source>
</evidence>
<evidence type="ECO:0000269" key="3">
    <source>
    </source>
</evidence>
<evidence type="ECO:0000269" key="4">
    <source>
    </source>
</evidence>
<evidence type="ECO:0000269" key="5">
    <source>
    </source>
</evidence>
<evidence type="ECO:0000305" key="6"/>
<evidence type="ECO:0007829" key="7">
    <source>
        <dbReference type="PDB" id="1E6C"/>
    </source>
</evidence>
<gene>
    <name type="primary">aroL</name>
    <name type="synonym">aroM</name>
</gene>
<name>AROL_DICCH</name>
<organism>
    <name type="scientific">Dickeya chrysanthemi</name>
    <name type="common">Pectobacterium chrysanthemi</name>
    <name type="synonym">Erwinia chrysanthemi</name>
    <dbReference type="NCBI Taxonomy" id="556"/>
    <lineage>
        <taxon>Bacteria</taxon>
        <taxon>Pseudomonadati</taxon>
        <taxon>Pseudomonadota</taxon>
        <taxon>Gammaproteobacteria</taxon>
        <taxon>Enterobacterales</taxon>
        <taxon>Pectobacteriaceae</taxon>
        <taxon>Dickeya</taxon>
    </lineage>
</organism>
<reference key="1">
    <citation type="journal article" date="1989" name="Nucleic Acids Res.">
        <title>Nucleotide sequence of an Erwinia chrysanthemi gene encoding shikimate kinase.</title>
        <authorList>
            <person name="Minton N.P."/>
            <person name="Whitehead P.J."/>
            <person name="Atkinson T."/>
            <person name="Gilbert H.J."/>
        </authorList>
    </citation>
    <scope>NUCLEOTIDE SEQUENCE [GENOMIC DNA]</scope>
</reference>
<reference key="2">
    <citation type="journal article" date="1997" name="Acta Crystallogr. D">
        <title>Crystallization and preliminary X-ray crystallographic analysis of shikimate kinase from Erwinia chrysanthemi.</title>
        <authorList>
            <person name="Krell T."/>
            <person name="Coyle J.E."/>
            <person name="Horsburgh M.J."/>
            <person name="Coggins J.R."/>
            <person name="Lapthorn A.J."/>
        </authorList>
    </citation>
    <scope>CRYSTALLIZATION</scope>
    <scope>MASS SPECTROMETRY</scope>
    <scope>SUBUNIT</scope>
</reference>
<reference key="3">
    <citation type="journal article" date="2003" name="Biochim. Biophys. Acta">
        <title>Effects of salts on the function and conformational stability of shikimate kinase.</title>
        <authorList>
            <person name="Cerasoli E."/>
            <person name="Kelly S.M."/>
            <person name="Coggins J.R."/>
            <person name="Lapthorn A.J."/>
            <person name="Clarke D.T."/>
            <person name="Price N.C."/>
        </authorList>
    </citation>
    <scope>ACTIVITY REGULATION</scope>
    <scope>EFFECTS OF SALTS</scope>
</reference>
<reference key="4">
    <citation type="journal article" date="1998" name="J. Mol. Biol.">
        <title>The three-dimensional structure of shikimate kinase.</title>
        <authorList>
            <person name="Krell T."/>
            <person name="Coggins J.R."/>
            <person name="Lapthorn A.J."/>
        </authorList>
    </citation>
    <scope>X-RAY CRYSTALLOGRAPHY (1.9 ANGSTROMS) OF NATIVE PROTEIN AND COMPLEX WITH MG-ADP</scope>
    <scope>COFACTOR</scope>
    <source>
        <strain>NCPPB 1066</strain>
    </source>
</reference>
<reference key="5">
    <citation type="journal article" date="2001" name="Protein Sci.">
        <title>Biochemical and X-ray crystallographic studies on shikimate kinase: the important structural role of the P-loop lysine.</title>
        <authorList>
            <person name="Krell T."/>
            <person name="Maclean J."/>
            <person name="Boam D.J."/>
            <person name="Cooper A."/>
            <person name="Resmini M."/>
            <person name="Brocklehurst K."/>
            <person name="Kelly S.M."/>
            <person name="Price N.C."/>
            <person name="Lapthorn A.J."/>
            <person name="Coggins J.R."/>
        </authorList>
    </citation>
    <scope>X-RAY CRYSTALLOGRAPHY (1.8 ANGSTROMS) OF MUTANT MET-15</scope>
    <scope>FUNCTION</scope>
    <scope>KINETIC PARAMETERS</scope>
    <scope>MUTAGENESIS OF CYS-13; LYS-15; ASP-34 AND CYS-162</scope>
</reference>
<protein>
    <recommendedName>
        <fullName>Shikimate kinase 2</fullName>
        <shortName>SK 2</shortName>
        <ecNumber>2.7.1.71</ecNumber>
    </recommendedName>
    <alternativeName>
        <fullName>Shikimate kinase II</fullName>
        <shortName>SKII</shortName>
    </alternativeName>
</protein>
<dbReference type="EC" id="2.7.1.71"/>
<dbReference type="EMBL" id="X14777">
    <property type="protein sequence ID" value="CAA32883.1"/>
    <property type="molecule type" value="Genomic_DNA"/>
</dbReference>
<dbReference type="PIR" id="S09613">
    <property type="entry name" value="S09613"/>
</dbReference>
<dbReference type="PDB" id="1E6C">
    <property type="method" value="X-ray"/>
    <property type="resolution" value="1.80 A"/>
    <property type="chains" value="A/B=1-173"/>
</dbReference>
<dbReference type="PDB" id="1SHK">
    <property type="method" value="X-ray"/>
    <property type="resolution" value="1.90 A"/>
    <property type="chains" value="A/B=1-173"/>
</dbReference>
<dbReference type="PDB" id="2SHK">
    <property type="method" value="X-ray"/>
    <property type="resolution" value="2.60 A"/>
    <property type="chains" value="A/B=1-173"/>
</dbReference>
<dbReference type="PDBsum" id="1E6C"/>
<dbReference type="PDBsum" id="1SHK"/>
<dbReference type="PDBsum" id="2SHK"/>
<dbReference type="SMR" id="P10880"/>
<dbReference type="SABIO-RK" id="P10880"/>
<dbReference type="UniPathway" id="UPA00053">
    <property type="reaction ID" value="UER00088"/>
</dbReference>
<dbReference type="EvolutionaryTrace" id="P10880"/>
<dbReference type="GO" id="GO:0005829">
    <property type="term" value="C:cytosol"/>
    <property type="evidence" value="ECO:0007669"/>
    <property type="project" value="TreeGrafter"/>
</dbReference>
<dbReference type="GO" id="GO:0005524">
    <property type="term" value="F:ATP binding"/>
    <property type="evidence" value="ECO:0007669"/>
    <property type="project" value="UniProtKB-UniRule"/>
</dbReference>
<dbReference type="GO" id="GO:0000287">
    <property type="term" value="F:magnesium ion binding"/>
    <property type="evidence" value="ECO:0007669"/>
    <property type="project" value="UniProtKB-UniRule"/>
</dbReference>
<dbReference type="GO" id="GO:0004765">
    <property type="term" value="F:shikimate kinase activity"/>
    <property type="evidence" value="ECO:0007669"/>
    <property type="project" value="UniProtKB-UniRule"/>
</dbReference>
<dbReference type="GO" id="GO:0008652">
    <property type="term" value="P:amino acid biosynthetic process"/>
    <property type="evidence" value="ECO:0007669"/>
    <property type="project" value="UniProtKB-KW"/>
</dbReference>
<dbReference type="GO" id="GO:0009073">
    <property type="term" value="P:aromatic amino acid family biosynthetic process"/>
    <property type="evidence" value="ECO:0007669"/>
    <property type="project" value="UniProtKB-KW"/>
</dbReference>
<dbReference type="GO" id="GO:0009423">
    <property type="term" value="P:chorismate biosynthetic process"/>
    <property type="evidence" value="ECO:0007669"/>
    <property type="project" value="UniProtKB-UniRule"/>
</dbReference>
<dbReference type="CDD" id="cd00464">
    <property type="entry name" value="SK"/>
    <property type="match status" value="1"/>
</dbReference>
<dbReference type="Gene3D" id="3.40.50.300">
    <property type="entry name" value="P-loop containing nucleotide triphosphate hydrolases"/>
    <property type="match status" value="1"/>
</dbReference>
<dbReference type="HAMAP" id="MF_00109">
    <property type="entry name" value="Shikimate_kinase"/>
    <property type="match status" value="1"/>
</dbReference>
<dbReference type="HAMAP" id="MF_01269">
    <property type="entry name" value="Shikimate_kinase_2"/>
    <property type="match status" value="1"/>
</dbReference>
<dbReference type="InterPro" id="IPR027417">
    <property type="entry name" value="P-loop_NTPase"/>
</dbReference>
<dbReference type="InterPro" id="IPR031322">
    <property type="entry name" value="Shikimate/glucono_kinase"/>
</dbReference>
<dbReference type="InterPro" id="IPR000623">
    <property type="entry name" value="Shikimate_kinase/TSH1"/>
</dbReference>
<dbReference type="InterPro" id="IPR027544">
    <property type="entry name" value="Shikimate_kinase_2"/>
</dbReference>
<dbReference type="InterPro" id="IPR023000">
    <property type="entry name" value="Shikimate_kinase_CS"/>
</dbReference>
<dbReference type="NCBIfam" id="NF002988">
    <property type="entry name" value="PRK03731.1"/>
    <property type="match status" value="1"/>
</dbReference>
<dbReference type="PANTHER" id="PTHR21087">
    <property type="entry name" value="SHIKIMATE KINASE"/>
    <property type="match status" value="1"/>
</dbReference>
<dbReference type="PANTHER" id="PTHR21087:SF21">
    <property type="entry name" value="SHIKIMATE KINASE 2"/>
    <property type="match status" value="1"/>
</dbReference>
<dbReference type="Pfam" id="PF01202">
    <property type="entry name" value="SKI"/>
    <property type="match status" value="1"/>
</dbReference>
<dbReference type="PRINTS" id="PR01100">
    <property type="entry name" value="SHIKIMTKNASE"/>
</dbReference>
<dbReference type="SUPFAM" id="SSF52540">
    <property type="entry name" value="P-loop containing nucleoside triphosphate hydrolases"/>
    <property type="match status" value="1"/>
</dbReference>
<dbReference type="PROSITE" id="PS01128">
    <property type="entry name" value="SHIKIMATE_KINASE"/>
    <property type="match status" value="1"/>
</dbReference>
<comment type="function">
    <text evidence="2">Catalyzes the specific phosphorylation of the 3-hydroxyl group of shikimic acid using ATP as a cosubstrate.</text>
</comment>
<comment type="catalytic activity">
    <reaction>
        <text>shikimate + ATP = 3-phosphoshikimate + ADP + H(+)</text>
        <dbReference type="Rhea" id="RHEA:13121"/>
        <dbReference type="ChEBI" id="CHEBI:15378"/>
        <dbReference type="ChEBI" id="CHEBI:30616"/>
        <dbReference type="ChEBI" id="CHEBI:36208"/>
        <dbReference type="ChEBI" id="CHEBI:145989"/>
        <dbReference type="ChEBI" id="CHEBI:456216"/>
        <dbReference type="EC" id="2.7.1.71"/>
    </reaction>
</comment>
<comment type="cofactor">
    <cofactor evidence="5">
        <name>Mg(2+)</name>
        <dbReference type="ChEBI" id="CHEBI:18420"/>
    </cofactor>
    <text evidence="5">Binds 1 Mg(2+) ion per subunit.</text>
</comment>
<comment type="activity regulation">
    <text evidence="3">Inhibited by chloride and sulfate ions.</text>
</comment>
<comment type="biophysicochemical properties">
    <kinetics>
        <KM evidence="2">310 uM for shikimate</KM>
        <KM evidence="2">620 uM for ATP</KM>
    </kinetics>
</comment>
<comment type="pathway">
    <text>Metabolic intermediate biosynthesis; chorismate biosynthesis; chorismate from D-erythrose 4-phosphate and phosphoenolpyruvate: step 5/7.</text>
</comment>
<comment type="subunit">
    <text evidence="4">Monomer.</text>
</comment>
<comment type="subcellular location">
    <subcellularLocation>
        <location evidence="1">Cytoplasm</location>
    </subcellularLocation>
</comment>
<comment type="domain">
    <text>The LID domain closes over the active site upon ATP binding.</text>
</comment>
<comment type="mass spectrometry" mass="18955.0" method="Electrospray" evidence="4"/>
<comment type="similarity">
    <text evidence="6">Belongs to the shikimate kinase family. AroL subfamily.</text>
</comment>
<comment type="caution">
    <text evidence="6">It is uncertain whether the initial Met is cleaved or not.</text>
</comment>
<keyword id="KW-0002">3D-structure</keyword>
<keyword id="KW-0028">Amino-acid biosynthesis</keyword>
<keyword id="KW-0057">Aromatic amino acid biosynthesis</keyword>
<keyword id="KW-0067">ATP-binding</keyword>
<keyword id="KW-0963">Cytoplasm</keyword>
<keyword id="KW-0418">Kinase</keyword>
<keyword id="KW-0460">Magnesium</keyword>
<keyword id="KW-0479">Metal-binding</keyword>
<keyword id="KW-0547">Nucleotide-binding</keyword>
<keyword id="KW-0808">Transferase</keyword>
<proteinExistence type="evidence at protein level"/>